<feature type="chain" id="PRO_0000181609" description="Large ribosomal subunit protein bL25">
    <location>
        <begin position="1"/>
        <end position="206"/>
    </location>
</feature>
<feature type="region of interest" description="bL25 domain">
    <location>
        <begin position="1"/>
        <end position="91"/>
    </location>
</feature>
<feature type="region of interest" description="CTC domain">
    <location>
        <begin position="92"/>
        <end position="206"/>
    </location>
</feature>
<feature type="region of interest" description="Disordered" evidence="1">
    <location>
        <begin position="184"/>
        <end position="206"/>
    </location>
</feature>
<feature type="compositionally biased region" description="Basic and acidic residues" evidence="1">
    <location>
        <begin position="195"/>
        <end position="206"/>
    </location>
</feature>
<feature type="mutagenesis site" description="Destabilizes formation of the 5S rRNA/N-terminal bL25 complex." evidence="4">
    <original>R</original>
    <variation>A</variation>
    <location>
        <position position="10"/>
    </location>
</feature>
<feature type="mutagenesis site" description="No effect on 5S rRNA/N-terminal bL25 complex formation." evidence="4">
    <original>K</original>
    <variation>A</variation>
    <location>
        <position position="14"/>
    </location>
</feature>
<feature type="mutagenesis site" description="No effect on 5S rRNA/N-terminal bL25 complex formation." evidence="4">
    <original>S</original>
    <variation>A</variation>
    <location>
        <position position="16"/>
    </location>
</feature>
<feature type="mutagenesis site" description="Destabilizes formation of the 5S rRNA/N-terminal bL25 complex." evidence="4">
    <original>R</original>
    <variation>A</variation>
    <location>
        <position position="19"/>
    </location>
</feature>
<feature type="mutagenesis site" description="No effect on 5S rRNA/N-terminal bL25 complex formation." evidence="4">
    <original>R</original>
    <variation>A</variation>
    <location>
        <position position="20"/>
    </location>
</feature>
<feature type="mutagenesis site" description="No 5S rRNA/N-terminal bL25 complex formed." evidence="4">
    <original>Y</original>
    <variation>F</variation>
    <variation>R</variation>
    <variation>S</variation>
    <location>
        <position position="29"/>
    </location>
</feature>
<feature type="mutagenesis site" description="Destabilizes formation of the 5S rRNA/N-terminal bL25 complex." evidence="4">
    <original>H</original>
    <variation>A</variation>
    <variation>N</variation>
    <variation>T</variation>
    <location>
        <position position="85"/>
    </location>
</feature>
<feature type="mutagenesis site" description="No 5S rRNA/N-terminal bL25 complex formed." evidence="4">
    <original>H</original>
    <variation>F</variation>
    <location>
        <position position="85"/>
    </location>
</feature>
<feature type="mutagenesis site" description="Strongly destabilizes formation of the 5S rRNA/N-terminal bL25 complex." evidence="4">
    <original>D</original>
    <variation>E</variation>
    <location>
        <position position="87"/>
    </location>
</feature>
<feature type="mutagenesis site" description="No 5S rRNA/N-terminal bL25 complex formed." evidence="4">
    <original>D</original>
    <variation>N</variation>
    <variation>S</variation>
    <location>
        <position position="87"/>
    </location>
</feature>
<feature type="sequence conflict" description="In Ref. 2; AA sequence." evidence="7" ref="2">
    <original>L</original>
    <variation>V</variation>
    <location>
        <position position="27"/>
    </location>
</feature>
<feature type="strand" evidence="8">
    <location>
        <begin position="2"/>
        <end position="6"/>
    </location>
</feature>
<feature type="strand" evidence="8">
    <location>
        <begin position="11"/>
        <end position="13"/>
    </location>
</feature>
<feature type="helix" evidence="8">
    <location>
        <begin position="15"/>
        <end position="20"/>
    </location>
</feature>
<feature type="strand" evidence="8">
    <location>
        <begin position="23"/>
        <end position="29"/>
    </location>
</feature>
<feature type="strand" evidence="8">
    <location>
        <begin position="34"/>
        <end position="40"/>
    </location>
</feature>
<feature type="helix" evidence="8">
    <location>
        <begin position="41"/>
        <end position="51"/>
    </location>
</feature>
<feature type="turn" evidence="8">
    <location>
        <begin position="52"/>
        <end position="54"/>
    </location>
</feature>
<feature type="strand" evidence="8">
    <location>
        <begin position="55"/>
        <end position="60"/>
    </location>
</feature>
<feature type="strand" evidence="8">
    <location>
        <begin position="66"/>
        <end position="76"/>
    </location>
</feature>
<feature type="strand" evidence="8">
    <location>
        <begin position="78"/>
        <end position="81"/>
    </location>
</feature>
<feature type="strand" evidence="8">
    <location>
        <begin position="83"/>
        <end position="90"/>
    </location>
</feature>
<feature type="strand" evidence="8">
    <location>
        <begin position="96"/>
        <end position="106"/>
    </location>
</feature>
<feature type="helix" evidence="8">
    <location>
        <begin position="109"/>
        <end position="112"/>
    </location>
</feature>
<feature type="strand" evidence="8">
    <location>
        <begin position="116"/>
        <end position="119"/>
    </location>
</feature>
<feature type="strand" evidence="8">
    <location>
        <begin position="122"/>
        <end position="128"/>
    </location>
</feature>
<feature type="helix" evidence="8">
    <location>
        <begin position="130"/>
        <end position="132"/>
    </location>
</feature>
<feature type="strand" evidence="8">
    <location>
        <begin position="137"/>
        <end position="140"/>
    </location>
</feature>
<feature type="strand" evidence="8">
    <location>
        <begin position="148"/>
        <end position="151"/>
    </location>
</feature>
<feature type="helix" evidence="8">
    <location>
        <begin position="152"/>
        <end position="154"/>
    </location>
</feature>
<feature type="strand" evidence="8">
    <location>
        <begin position="162"/>
        <end position="165"/>
    </location>
</feature>
<feature type="strand" evidence="8">
    <location>
        <begin position="170"/>
        <end position="175"/>
    </location>
</feature>
<feature type="strand" evidence="8">
    <location>
        <begin position="177"/>
        <end position="181"/>
    </location>
</feature>
<name>RL25_THETH</name>
<proteinExistence type="evidence at protein level"/>
<dbReference type="EMBL" id="X94435">
    <property type="protein sequence ID" value="CAA64209.1"/>
    <property type="molecule type" value="Genomic_DNA"/>
</dbReference>
<dbReference type="PIR" id="S68792">
    <property type="entry name" value="S68792"/>
</dbReference>
<dbReference type="PDB" id="1FEU">
    <property type="method" value="X-ray"/>
    <property type="resolution" value="2.30 A"/>
    <property type="chains" value="A/D=1-206"/>
</dbReference>
<dbReference type="PDBsum" id="1FEU"/>
<dbReference type="SMR" id="P56930"/>
<dbReference type="EvolutionaryTrace" id="P56930"/>
<dbReference type="GO" id="GO:0022625">
    <property type="term" value="C:cytosolic large ribosomal subunit"/>
    <property type="evidence" value="ECO:0007669"/>
    <property type="project" value="TreeGrafter"/>
</dbReference>
<dbReference type="GO" id="GO:0008097">
    <property type="term" value="F:5S rRNA binding"/>
    <property type="evidence" value="ECO:0007669"/>
    <property type="project" value="InterPro"/>
</dbReference>
<dbReference type="GO" id="GO:0003735">
    <property type="term" value="F:structural constituent of ribosome"/>
    <property type="evidence" value="ECO:0007669"/>
    <property type="project" value="InterPro"/>
</dbReference>
<dbReference type="GO" id="GO:0006412">
    <property type="term" value="P:translation"/>
    <property type="evidence" value="ECO:0007669"/>
    <property type="project" value="UniProtKB-UniRule"/>
</dbReference>
<dbReference type="CDD" id="cd00495">
    <property type="entry name" value="Ribosomal_L25_TL5_CTC"/>
    <property type="match status" value="1"/>
</dbReference>
<dbReference type="Gene3D" id="2.170.120.20">
    <property type="entry name" value="Ribosomal protein L25, beta domain"/>
    <property type="match status" value="1"/>
</dbReference>
<dbReference type="Gene3D" id="2.40.240.10">
    <property type="entry name" value="Ribosomal Protein L25, Chain P"/>
    <property type="match status" value="1"/>
</dbReference>
<dbReference type="HAMAP" id="MF_01334">
    <property type="entry name" value="Ribosomal_bL25_CTC"/>
    <property type="match status" value="1"/>
</dbReference>
<dbReference type="InterPro" id="IPR020056">
    <property type="entry name" value="Rbsml_bL25/Gln-tRNA_synth_N"/>
</dbReference>
<dbReference type="InterPro" id="IPR011035">
    <property type="entry name" value="Ribosomal_bL25/Gln-tRNA_synth"/>
</dbReference>
<dbReference type="InterPro" id="IPR020057">
    <property type="entry name" value="Ribosomal_bL25_b-dom"/>
</dbReference>
<dbReference type="InterPro" id="IPR037121">
    <property type="entry name" value="Ribosomal_bL25_C"/>
</dbReference>
<dbReference type="InterPro" id="IPR001021">
    <property type="entry name" value="Ribosomal_bL25_long"/>
</dbReference>
<dbReference type="InterPro" id="IPR029751">
    <property type="entry name" value="Ribosomal_L25_dom"/>
</dbReference>
<dbReference type="InterPro" id="IPR020930">
    <property type="entry name" value="Ribosomal_uL5_bac-type"/>
</dbReference>
<dbReference type="NCBIfam" id="TIGR00731">
    <property type="entry name" value="bL25_bact_ctc"/>
    <property type="match status" value="1"/>
</dbReference>
<dbReference type="PANTHER" id="PTHR33284">
    <property type="entry name" value="RIBOSOMAL PROTEIN L25/GLN-TRNA SYNTHETASE, ANTI-CODON-BINDING DOMAIN-CONTAINING PROTEIN"/>
    <property type="match status" value="1"/>
</dbReference>
<dbReference type="PANTHER" id="PTHR33284:SF1">
    <property type="entry name" value="RIBOSOMAL PROTEIN L25_GLN-TRNA SYNTHETASE, ANTI-CODON-BINDING DOMAIN-CONTAINING PROTEIN"/>
    <property type="match status" value="1"/>
</dbReference>
<dbReference type="Pfam" id="PF01386">
    <property type="entry name" value="Ribosomal_L25p"/>
    <property type="match status" value="1"/>
</dbReference>
<dbReference type="Pfam" id="PF14693">
    <property type="entry name" value="Ribosomal_TL5_C"/>
    <property type="match status" value="1"/>
</dbReference>
<dbReference type="SUPFAM" id="SSF50715">
    <property type="entry name" value="Ribosomal protein L25-like"/>
    <property type="match status" value="1"/>
</dbReference>
<evidence type="ECO:0000256" key="1">
    <source>
        <dbReference type="SAM" id="MobiDB-lite"/>
    </source>
</evidence>
<evidence type="ECO:0000269" key="2">
    <source>
    </source>
</evidence>
<evidence type="ECO:0000269" key="3">
    <source>
    </source>
</evidence>
<evidence type="ECO:0000269" key="4">
    <source>
    </source>
</evidence>
<evidence type="ECO:0000269" key="5">
    <source>
    </source>
</evidence>
<evidence type="ECO:0000303" key="6">
    <source>
    </source>
</evidence>
<evidence type="ECO:0000305" key="7"/>
<evidence type="ECO:0007829" key="8">
    <source>
        <dbReference type="PDB" id="1FEU"/>
    </source>
</evidence>
<reference key="1">
    <citation type="journal article" date="1996" name="Biochimie">
        <title>A ribosomal protein from Thermus thermophilus is homologous to a general shock protein.</title>
        <authorList>
            <person name="Gryaznova O.I."/>
            <person name="Davydova N.L."/>
            <person name="Gongadze G.M."/>
            <person name="Jonsson B.-H."/>
            <person name="Garber M.B."/>
            <person name="Liljas A."/>
        </authorList>
    </citation>
    <scope>NUCLEOTIDE SEQUENCE [GENOMIC DNA]</scope>
    <source>
        <strain>VK1</strain>
    </source>
</reference>
<reference key="2">
    <citation type="journal article" date="1996" name="FEBS Lett.">
        <title>5S rRNA binding ribosomal proteins from Thermus thermophilus: identification and some structural properties.</title>
        <authorList>
            <person name="Gongadze G.M."/>
            <person name="Kashparov I."/>
            <person name="Lorenz S."/>
            <person name="Schroeder W."/>
            <person name="Erdmann V.A."/>
            <person name="Liljas A."/>
            <person name="Garber M.B."/>
        </authorList>
    </citation>
    <scope>PROTEIN SEQUENCE OF 1-53 AND 82-90</scope>
    <scope>CHARACTERIZATION OF 5S RRNA BINDING</scope>
    <source>
        <strain>VK1</strain>
    </source>
</reference>
<reference key="3">
    <citation type="journal article" date="1999" name="FEBS Lett.">
        <title>N-terminal domain, residues 1-91, of ribosomal protein TL5 from Thermus thermophilus binds specifically and strongly to the region of 5S rRNA containing loop E.</title>
        <authorList>
            <person name="Gongadze G.M."/>
            <person name="Meshcheryakov V.A."/>
            <person name="Serganov A.A."/>
            <person name="Fomenkova N.P."/>
            <person name="Mudrik E.S."/>
            <person name="Jonsson B.H."/>
            <person name="Liljas A."/>
            <person name="Nikonov S.V."/>
            <person name="Garber M.B."/>
        </authorList>
    </citation>
    <scope>IDENTIFICATION OF FUNCTIONAL DOMAINS</scope>
    <scope>5S RRNA-BINDING</scope>
    <source>
        <strain>VK1</strain>
    </source>
</reference>
<reference key="4">
    <citation type="journal article" date="2000" name="Dokl. Biochem.">
        <title>Ribosomal protein TL5 of T. thermophilus is incorporated in the E. coli 50S ribosomal subunit.</title>
        <authorList>
            <person name="Zvereva M.E."/>
            <person name="Shpanchenko O.V."/>
            <person name="Nierhaus K."/>
            <person name="Dontsova O.A."/>
        </authorList>
    </citation>
    <scope>SUBSTITUTES FOR L25 IN E.COLI</scope>
</reference>
<reference key="5">
    <citation type="journal article" date="2005" name="J. Biol. Chem.">
        <title>The crucial role of conserved intermolecular H-bonds inaccessible to the solvent in formation and stabilization of the TL5.5 SrRNA complex.</title>
        <authorList>
            <person name="Gongadze G.M."/>
            <person name="Korepanov A.P."/>
            <person name="Stolboushkina E.A."/>
            <person name="Zelinskaya N.V."/>
            <person name="Korobeinikova A.V."/>
            <person name="Ruzanov M.V."/>
            <person name="Eliseev B.D."/>
            <person name="Nikonov O.S."/>
            <person name="Nikonov S.V."/>
            <person name="Garber M.B."/>
            <person name="Lim V.I."/>
        </authorList>
    </citation>
    <scope>DOMAIN</scope>
    <scope>MUTAGENESIS OF ARG-10; LYS-14; SER-16; ARG-19; ARG-20; TYR-29; HIS-85 AND ASP-87</scope>
    <scope>5S RRNA-BINDING</scope>
</reference>
<reference key="6">
    <citation type="journal article" date="2001" name="Acta Crystallogr. D">
        <title>Structure of ribosomal protein TL5 complexed with RNA provides new insights into the CTC family of stress proteins.</title>
        <authorList>
            <person name="Fedorov R."/>
            <person name="Meshcheryakov V."/>
            <person name="Gongadze G."/>
            <person name="Fomenkova N."/>
            <person name="Nevskaya N."/>
            <person name="Selmer M."/>
            <person name="Laurberg M."/>
            <person name="Kristensen O."/>
            <person name="Al-Karadaghi S."/>
            <person name="Liljas A."/>
            <person name="Garber M.B."/>
            <person name="Nikonov S."/>
        </authorList>
    </citation>
    <scope>X-RAY CRYSTALLOGRAPHY (2.3 ANGSTROMS)</scope>
</reference>
<gene>
    <name type="primary">rplY</name>
    <name type="synonym">rpl25</name>
    <name type="synonym">rptL5</name>
</gene>
<organism>
    <name type="scientific">Thermus thermophilus</name>
    <dbReference type="NCBI Taxonomy" id="274"/>
    <lineage>
        <taxon>Bacteria</taxon>
        <taxon>Thermotogati</taxon>
        <taxon>Deinococcota</taxon>
        <taxon>Deinococci</taxon>
        <taxon>Thermales</taxon>
        <taxon>Thermaceae</taxon>
        <taxon>Thermus</taxon>
    </lineage>
</organism>
<accession>P56930</accession>
<accession>Q7M0Q3</accession>
<sequence>MEYRLKAYYREGEKPSALRRAGKLPGLMYNRHLNRKVYVDLVEFDKVFRQASIHHVIVLELPDGQSLPTLVRQVNLDKRRRRPEHVDFFVLSDEPVEMYVPLRFVGTPAGVRAGGVLQEIHRDILVKVSPRNIPEFIEVDVSGLEIGDSLHASDLKLPPGVELAVSPEETIAAVVPPEDVEKLAEEAAAEVAEPEVIKKGKEEEEE</sequence>
<keyword id="KW-0002">3D-structure</keyword>
<keyword id="KW-0903">Direct protein sequencing</keyword>
<keyword id="KW-0687">Ribonucleoprotein</keyword>
<keyword id="KW-0689">Ribosomal protein</keyword>
<keyword id="KW-0694">RNA-binding</keyword>
<keyword id="KW-0699">rRNA-binding</keyword>
<comment type="function">
    <text evidence="2 5">This is one of 3 proteins that mediate the attachment of the 5S rRNA onto the large ribosomal subunit.</text>
</comment>
<comment type="subunit">
    <text>Part of the 50S ribosomal subunit. Contacts the 5S rRNA.</text>
</comment>
<comment type="domain">
    <text evidence="4">The N-terminal 91 amino acids are capable of binding to 5S rRNA and also of displacing full-length protein bound to 5S rRNA. The first 80 amino acids are not sufficient.</text>
</comment>
<comment type="miscellaneous">
    <text evidence="3">Despite its considerably larger size this protein can substitute for the endogenous E.coli bL25 protein in vitro.</text>
</comment>
<comment type="similarity">
    <text evidence="7">Belongs to the bacterial ribosomal protein bL25 family. CTC subfamily.</text>
</comment>
<protein>
    <recommendedName>
        <fullName evidence="7">Large ribosomal subunit protein bL25</fullName>
    </recommendedName>
    <alternativeName>
        <fullName>50S ribosomal protein L25</fullName>
        <shortName evidence="6">TL5</shortName>
    </alternativeName>
</protein>